<sequence>MTKSMYAYVRDAWKIPDDTGVKALLWERMQDWRREGSIVRVRRPTRIDRARALGYKAKQGIVVVRVKVRRGGRRASRYVRGRRTARMGVNRKTMGKSIQRIAEERACRKYPNMEVLNSYWVGEDGRQKWYEVILLDPHHPSIINDKTLNWISKPGHRGRSERGLTSAGVKGRGMRRRGKGTEKCRPSVRANANRAK</sequence>
<comment type="similarity">
    <text evidence="1">Belongs to the eukaryotic ribosomal protein eL15 family.</text>
</comment>
<protein>
    <recommendedName>
        <fullName evidence="1">Large ribosomal subunit protein eL15</fullName>
    </recommendedName>
    <alternativeName>
        <fullName evidence="3">50S ribosomal protein L15e</fullName>
    </alternativeName>
</protein>
<evidence type="ECO:0000255" key="1">
    <source>
        <dbReference type="HAMAP-Rule" id="MF_00256"/>
    </source>
</evidence>
<evidence type="ECO:0000256" key="2">
    <source>
        <dbReference type="SAM" id="MobiDB-lite"/>
    </source>
</evidence>
<evidence type="ECO:0000305" key="3"/>
<reference key="1">
    <citation type="journal article" date="2016" name="Stand. Genomic Sci.">
        <title>Complete genome sequence of Methanospirillum hungatei type strain JF1.</title>
        <authorList>
            <person name="Gunsalus R.P."/>
            <person name="Cook L.E."/>
            <person name="Crable B."/>
            <person name="Rohlin L."/>
            <person name="McDonald E."/>
            <person name="Mouttaki H."/>
            <person name="Sieber J.R."/>
            <person name="Poweleit N."/>
            <person name="Zhou H."/>
            <person name="Lapidus A.L."/>
            <person name="Daligault H.E."/>
            <person name="Land M."/>
            <person name="Gilna P."/>
            <person name="Ivanova N."/>
            <person name="Kyrpides N."/>
            <person name="Culley D.E."/>
            <person name="McInerney M.J."/>
        </authorList>
    </citation>
    <scope>NUCLEOTIDE SEQUENCE [LARGE SCALE GENOMIC DNA]</scope>
    <source>
        <strain>ATCC 27890 / DSM 864 / NBRC 100397 / JF-1</strain>
    </source>
</reference>
<dbReference type="EMBL" id="CP000254">
    <property type="protein sequence ID" value="ABD41984.1"/>
    <property type="molecule type" value="Genomic_DNA"/>
</dbReference>
<dbReference type="RefSeq" id="WP_011449242.1">
    <property type="nucleotide sequence ID" value="NC_007796.1"/>
</dbReference>
<dbReference type="SMR" id="Q2FT55"/>
<dbReference type="FunCoup" id="Q2FT55">
    <property type="interactions" value="162"/>
</dbReference>
<dbReference type="STRING" id="323259.Mhun_2279"/>
<dbReference type="EnsemblBacteria" id="ABD41984">
    <property type="protein sequence ID" value="ABD41984"/>
    <property type="gene ID" value="Mhun_2279"/>
</dbReference>
<dbReference type="GeneID" id="3925114"/>
<dbReference type="KEGG" id="mhu:Mhun_2279"/>
<dbReference type="eggNOG" id="arCOG04209">
    <property type="taxonomic scope" value="Archaea"/>
</dbReference>
<dbReference type="HOGENOM" id="CLU_080796_1_0_2"/>
<dbReference type="InParanoid" id="Q2FT55"/>
<dbReference type="OrthoDB" id="8183at2157"/>
<dbReference type="Proteomes" id="UP000001941">
    <property type="component" value="Chromosome"/>
</dbReference>
<dbReference type="GO" id="GO:0022625">
    <property type="term" value="C:cytosolic large ribosomal subunit"/>
    <property type="evidence" value="ECO:0007669"/>
    <property type="project" value="TreeGrafter"/>
</dbReference>
<dbReference type="GO" id="GO:0003723">
    <property type="term" value="F:RNA binding"/>
    <property type="evidence" value="ECO:0007669"/>
    <property type="project" value="TreeGrafter"/>
</dbReference>
<dbReference type="GO" id="GO:0003735">
    <property type="term" value="F:structural constituent of ribosome"/>
    <property type="evidence" value="ECO:0007669"/>
    <property type="project" value="InterPro"/>
</dbReference>
<dbReference type="GO" id="GO:0002181">
    <property type="term" value="P:cytoplasmic translation"/>
    <property type="evidence" value="ECO:0007669"/>
    <property type="project" value="TreeGrafter"/>
</dbReference>
<dbReference type="FunFam" id="3.40.1120.10:FF:000002">
    <property type="entry name" value="50S ribosomal protein L15e"/>
    <property type="match status" value="1"/>
</dbReference>
<dbReference type="Gene3D" id="3.40.1120.10">
    <property type="entry name" value="Ribosomal protein l15e"/>
    <property type="match status" value="1"/>
</dbReference>
<dbReference type="HAMAP" id="MF_00256">
    <property type="entry name" value="Ribosomal_eL15"/>
    <property type="match status" value="1"/>
</dbReference>
<dbReference type="InterPro" id="IPR024794">
    <property type="entry name" value="Rbsml_eL15_core_dom_sf"/>
</dbReference>
<dbReference type="InterPro" id="IPR000439">
    <property type="entry name" value="Ribosomal_eL15"/>
</dbReference>
<dbReference type="InterPro" id="IPR020926">
    <property type="entry name" value="Ribosomal_eL15_arc"/>
</dbReference>
<dbReference type="InterPro" id="IPR012678">
    <property type="entry name" value="Ribosomal_uL23/eL15/eS24_sf"/>
</dbReference>
<dbReference type="NCBIfam" id="NF003269">
    <property type="entry name" value="PRK04243.1"/>
    <property type="match status" value="1"/>
</dbReference>
<dbReference type="PANTHER" id="PTHR11847:SF4">
    <property type="entry name" value="LARGE RIBOSOMAL SUBUNIT PROTEIN EL15"/>
    <property type="match status" value="1"/>
</dbReference>
<dbReference type="PANTHER" id="PTHR11847">
    <property type="entry name" value="RIBOSOMAL PROTEIN L15"/>
    <property type="match status" value="1"/>
</dbReference>
<dbReference type="Pfam" id="PF00827">
    <property type="entry name" value="Ribosomal_L15e"/>
    <property type="match status" value="1"/>
</dbReference>
<dbReference type="SMART" id="SM01384">
    <property type="entry name" value="Ribosomal_L15e"/>
    <property type="match status" value="1"/>
</dbReference>
<dbReference type="SUPFAM" id="SSF54189">
    <property type="entry name" value="Ribosomal proteins S24e, L23 and L15e"/>
    <property type="match status" value="1"/>
</dbReference>
<accession>Q2FT55</accession>
<name>RL15E_METHJ</name>
<proteinExistence type="inferred from homology"/>
<organism>
    <name type="scientific">Methanospirillum hungatei JF-1 (strain ATCC 27890 / DSM 864 / NBRC 100397 / JF-1)</name>
    <dbReference type="NCBI Taxonomy" id="323259"/>
    <lineage>
        <taxon>Archaea</taxon>
        <taxon>Methanobacteriati</taxon>
        <taxon>Methanobacteriota</taxon>
        <taxon>Stenosarchaea group</taxon>
        <taxon>Methanomicrobia</taxon>
        <taxon>Methanomicrobiales</taxon>
        <taxon>Methanospirillaceae</taxon>
        <taxon>Methanospirillum</taxon>
    </lineage>
</organism>
<gene>
    <name evidence="1" type="primary">rpl15e</name>
    <name type="ordered locus">Mhun_2279</name>
</gene>
<feature type="chain" id="PRO_0000304207" description="Large ribosomal subunit protein eL15">
    <location>
        <begin position="1"/>
        <end position="196"/>
    </location>
</feature>
<feature type="region of interest" description="Disordered" evidence="2">
    <location>
        <begin position="154"/>
        <end position="196"/>
    </location>
</feature>
<keyword id="KW-1185">Reference proteome</keyword>
<keyword id="KW-0687">Ribonucleoprotein</keyword>
<keyword id="KW-0689">Ribosomal protein</keyword>